<evidence type="ECO:0000255" key="1">
    <source>
        <dbReference type="HAMAP-Rule" id="MF_01973"/>
    </source>
</evidence>
<evidence type="ECO:0000255" key="2">
    <source>
        <dbReference type="PROSITE-ProRule" id="PRU01122"/>
    </source>
</evidence>
<evidence type="ECO:0000255" key="3">
    <source>
        <dbReference type="PROSITE-ProRule" id="PRU01123"/>
    </source>
</evidence>
<evidence type="ECO:0000256" key="4">
    <source>
        <dbReference type="SAM" id="MobiDB-lite"/>
    </source>
</evidence>
<accession>P36773</accession>
<reference key="1">
    <citation type="journal article" date="1993" name="J. Bacteriol.">
        <title>Cloning and nucleotide sequence of the Myxococcus xanthus lon gene: indispensability of lon for vegetative growth.</title>
        <authorList>
            <person name="Tojo N."/>
            <person name="Inouye S."/>
            <person name="Komano T."/>
        </authorList>
    </citation>
    <scope>NUCLEOTIDE SEQUENCE [GENOMIC DNA]</scope>
    <source>
        <strain>DZF1</strain>
    </source>
</reference>
<reference key="2">
    <citation type="submission" date="1999-02" db="EMBL/GenBank/DDBJ databases">
        <authorList>
            <person name="Ueki T."/>
            <person name="Inouye S."/>
        </authorList>
    </citation>
    <scope>NUCLEOTIDE SEQUENCE [GENOMIC DNA]</scope>
    <source>
        <strain>DZF1</strain>
    </source>
</reference>
<proteinExistence type="evidence at transcript level"/>
<gene>
    <name evidence="1" type="primary">lon1</name>
    <name type="synonym">lonV</name>
</gene>
<keyword id="KW-0067">ATP-binding</keyword>
<keyword id="KW-0963">Cytoplasm</keyword>
<keyword id="KW-0378">Hydrolase</keyword>
<keyword id="KW-0547">Nucleotide-binding</keyword>
<keyword id="KW-0645">Protease</keyword>
<keyword id="KW-0720">Serine protease</keyword>
<keyword id="KW-0346">Stress response</keyword>
<dbReference type="EC" id="3.4.21.53" evidence="1"/>
<dbReference type="EMBL" id="D12923">
    <property type="protein sequence ID" value="BAA02307.1"/>
    <property type="molecule type" value="Genomic_DNA"/>
</dbReference>
<dbReference type="EMBL" id="AF127082">
    <property type="protein sequence ID" value="AAD31005.1"/>
    <property type="molecule type" value="Genomic_DNA"/>
</dbReference>
<dbReference type="PIR" id="A49844">
    <property type="entry name" value="A49844"/>
</dbReference>
<dbReference type="SMR" id="P36773"/>
<dbReference type="MEROPS" id="S16.001"/>
<dbReference type="OMA" id="ICTANTM"/>
<dbReference type="GO" id="GO:0005737">
    <property type="term" value="C:cytoplasm"/>
    <property type="evidence" value="ECO:0007669"/>
    <property type="project" value="UniProtKB-SubCell"/>
</dbReference>
<dbReference type="GO" id="GO:0005524">
    <property type="term" value="F:ATP binding"/>
    <property type="evidence" value="ECO:0007669"/>
    <property type="project" value="UniProtKB-UniRule"/>
</dbReference>
<dbReference type="GO" id="GO:0016887">
    <property type="term" value="F:ATP hydrolysis activity"/>
    <property type="evidence" value="ECO:0007669"/>
    <property type="project" value="UniProtKB-UniRule"/>
</dbReference>
<dbReference type="GO" id="GO:0004176">
    <property type="term" value="F:ATP-dependent peptidase activity"/>
    <property type="evidence" value="ECO:0007669"/>
    <property type="project" value="UniProtKB-UniRule"/>
</dbReference>
<dbReference type="GO" id="GO:0043565">
    <property type="term" value="F:sequence-specific DNA binding"/>
    <property type="evidence" value="ECO:0007669"/>
    <property type="project" value="UniProtKB-UniRule"/>
</dbReference>
<dbReference type="GO" id="GO:0004252">
    <property type="term" value="F:serine-type endopeptidase activity"/>
    <property type="evidence" value="ECO:0007669"/>
    <property type="project" value="UniProtKB-UniRule"/>
</dbReference>
<dbReference type="GO" id="GO:0034605">
    <property type="term" value="P:cellular response to heat"/>
    <property type="evidence" value="ECO:0007669"/>
    <property type="project" value="UniProtKB-UniRule"/>
</dbReference>
<dbReference type="GO" id="GO:0006515">
    <property type="term" value="P:protein quality control for misfolded or incompletely synthesized proteins"/>
    <property type="evidence" value="ECO:0007669"/>
    <property type="project" value="UniProtKB-UniRule"/>
</dbReference>
<dbReference type="CDD" id="cd19500">
    <property type="entry name" value="RecA-like_Lon"/>
    <property type="match status" value="1"/>
</dbReference>
<dbReference type="FunFam" id="3.30.230.10:FF:000010">
    <property type="entry name" value="Lon protease"/>
    <property type="match status" value="1"/>
</dbReference>
<dbReference type="FunFam" id="1.20.5.5270:FF:000002">
    <property type="entry name" value="Lon protease homolog"/>
    <property type="match status" value="1"/>
</dbReference>
<dbReference type="FunFam" id="3.40.50.300:FF:000021">
    <property type="entry name" value="Lon protease homolog"/>
    <property type="match status" value="1"/>
</dbReference>
<dbReference type="Gene3D" id="1.10.8.60">
    <property type="match status" value="1"/>
</dbReference>
<dbReference type="Gene3D" id="1.20.5.5270">
    <property type="match status" value="1"/>
</dbReference>
<dbReference type="Gene3D" id="1.20.58.1480">
    <property type="match status" value="1"/>
</dbReference>
<dbReference type="Gene3D" id="3.30.230.10">
    <property type="match status" value="1"/>
</dbReference>
<dbReference type="Gene3D" id="2.30.130.40">
    <property type="entry name" value="LON domain-like"/>
    <property type="match status" value="1"/>
</dbReference>
<dbReference type="Gene3D" id="3.40.50.300">
    <property type="entry name" value="P-loop containing nucleotide triphosphate hydrolases"/>
    <property type="match status" value="1"/>
</dbReference>
<dbReference type="HAMAP" id="MF_01973">
    <property type="entry name" value="lon_bact"/>
    <property type="match status" value="1"/>
</dbReference>
<dbReference type="InterPro" id="IPR003593">
    <property type="entry name" value="AAA+_ATPase"/>
</dbReference>
<dbReference type="InterPro" id="IPR003959">
    <property type="entry name" value="ATPase_AAA_core"/>
</dbReference>
<dbReference type="InterPro" id="IPR027543">
    <property type="entry name" value="Lon_bac"/>
</dbReference>
<dbReference type="InterPro" id="IPR004815">
    <property type="entry name" value="Lon_bac/euk-typ"/>
</dbReference>
<dbReference type="InterPro" id="IPR054594">
    <property type="entry name" value="Lon_lid"/>
</dbReference>
<dbReference type="InterPro" id="IPR008269">
    <property type="entry name" value="Lon_proteolytic"/>
</dbReference>
<dbReference type="InterPro" id="IPR027065">
    <property type="entry name" value="Lon_Prtase"/>
</dbReference>
<dbReference type="InterPro" id="IPR003111">
    <property type="entry name" value="Lon_prtase_N"/>
</dbReference>
<dbReference type="InterPro" id="IPR046336">
    <property type="entry name" value="Lon_prtase_N_sf"/>
</dbReference>
<dbReference type="InterPro" id="IPR027417">
    <property type="entry name" value="P-loop_NTPase"/>
</dbReference>
<dbReference type="InterPro" id="IPR008268">
    <property type="entry name" value="Peptidase_S16_AS"/>
</dbReference>
<dbReference type="InterPro" id="IPR015947">
    <property type="entry name" value="PUA-like_sf"/>
</dbReference>
<dbReference type="InterPro" id="IPR020568">
    <property type="entry name" value="Ribosomal_Su5_D2-typ_SF"/>
</dbReference>
<dbReference type="InterPro" id="IPR014721">
    <property type="entry name" value="Ribsml_uS5_D2-typ_fold_subgr"/>
</dbReference>
<dbReference type="NCBIfam" id="TIGR00763">
    <property type="entry name" value="lon"/>
    <property type="match status" value="1"/>
</dbReference>
<dbReference type="NCBIfam" id="NF008053">
    <property type="entry name" value="PRK10787.1"/>
    <property type="match status" value="1"/>
</dbReference>
<dbReference type="PANTHER" id="PTHR10046">
    <property type="entry name" value="ATP DEPENDENT LON PROTEASE FAMILY MEMBER"/>
    <property type="match status" value="1"/>
</dbReference>
<dbReference type="Pfam" id="PF00004">
    <property type="entry name" value="AAA"/>
    <property type="match status" value="1"/>
</dbReference>
<dbReference type="Pfam" id="PF05362">
    <property type="entry name" value="Lon_C"/>
    <property type="match status" value="1"/>
</dbReference>
<dbReference type="Pfam" id="PF22667">
    <property type="entry name" value="Lon_lid"/>
    <property type="match status" value="1"/>
</dbReference>
<dbReference type="Pfam" id="PF02190">
    <property type="entry name" value="LON_substr_bdg"/>
    <property type="match status" value="1"/>
</dbReference>
<dbReference type="PIRSF" id="PIRSF001174">
    <property type="entry name" value="Lon_proteas"/>
    <property type="match status" value="1"/>
</dbReference>
<dbReference type="PRINTS" id="PR00830">
    <property type="entry name" value="ENDOLAPTASE"/>
</dbReference>
<dbReference type="SMART" id="SM00382">
    <property type="entry name" value="AAA"/>
    <property type="match status" value="1"/>
</dbReference>
<dbReference type="SMART" id="SM00464">
    <property type="entry name" value="LON"/>
    <property type="match status" value="1"/>
</dbReference>
<dbReference type="SUPFAM" id="SSF52540">
    <property type="entry name" value="P-loop containing nucleoside triphosphate hydrolases"/>
    <property type="match status" value="1"/>
</dbReference>
<dbReference type="SUPFAM" id="SSF88697">
    <property type="entry name" value="PUA domain-like"/>
    <property type="match status" value="1"/>
</dbReference>
<dbReference type="SUPFAM" id="SSF54211">
    <property type="entry name" value="Ribosomal protein S5 domain 2-like"/>
    <property type="match status" value="1"/>
</dbReference>
<dbReference type="PROSITE" id="PS51787">
    <property type="entry name" value="LON_N"/>
    <property type="match status" value="1"/>
</dbReference>
<dbReference type="PROSITE" id="PS51786">
    <property type="entry name" value="LON_PROTEOLYTIC"/>
    <property type="match status" value="1"/>
</dbReference>
<dbReference type="PROSITE" id="PS01046">
    <property type="entry name" value="LON_SER"/>
    <property type="match status" value="1"/>
</dbReference>
<sequence length="817" mass="91815">MFFGRDDKKEAQKRGLTVPLLPLRDIIVFPHMVVPLFVGREKSIAALKDAMAHKGPDDKAVILLAAQKKAKTNDPTPDDIFHFGTLGHVIQLLPLPDGTVKVLVEGVRRAKVKKFHPNDAFFMVEVEEVEEQTEKTVELEALVRSVHSVFEAFVKLNKRIPPEMLMQVASIDDPARLADTIVAHLSLKLNDKQALLETESPAKRLEKLYELMQGEIEILQVEKKIRTRVKKQMEKTQKEYYLNEQMQAIQKELGERDEFKNEIQEIEEKLKNKRMSKEATLKVKKELKKLRMMSPMSAEATVVRNYIDWIISLPWYDETQDRLDVTEAETVLNEDHYGLKKPKERILEYLAVQQLVKKLKGPVLCFVGPPGVGKTSLARSIARATGRKFVRLSLGGVRDEAEIRGHRRTYIGAMPGKLIQSLKKAGSNNPVFLLDEIDKMSTDFRGDPSAALLEVLDPEQNHTFNDHYLDLDYDLSKVMFICTANTMHNIPGPLQDRMEVIRIAGYTEPEKLSIARRYLIPKEQEANGLSDLKVDISDPALRTIIHRYTRESGVRSLEREIGGVFRKIARDVLKNGKRDIDVDRKMAMKFLGTPRYRYGMAEAEDQVGIVTGLAWTELGGEILTTEATIMPGKGKLIITGKLGEVMQESAQAAMSYVRSRAERFGIDRKVFENYDIHVHLPEGAIPKDGPSAGVTICTALVSALTRVLIRRDVAMTGEITLRGRVLPIGGLKEKTLAAHRAGIKTVLIPKANKKDLKDIPLKIRKQLRIVPVEFVDDVLREALVLEKPEEFGRKPTTDGGKLGGTTELPASPAVAPA</sequence>
<comment type="function">
    <text evidence="1">ATP-dependent serine protease that mediates the selective degradation of mutant and abnormal proteins as well as certain short-lived regulatory proteins. Required for cellular homeostasis and for survival from DNA damage and developmental changes induced by stress. Degrades polypeptides processively to yield small peptide fragments that are 5 to 10 amino acids long. Binds to DNA in a double-stranded, site-specific manner.</text>
</comment>
<comment type="catalytic activity">
    <reaction evidence="1">
        <text>Hydrolysis of proteins in presence of ATP.</text>
        <dbReference type="EC" id="3.4.21.53"/>
    </reaction>
</comment>
<comment type="subunit">
    <text evidence="1">Homohexamer. Organized in a ring with a central cavity.</text>
</comment>
<comment type="subcellular location">
    <subcellularLocation>
        <location>Cytoplasm</location>
    </subcellularLocation>
</comment>
<comment type="developmental stage">
    <text>Expressed during vegetative growth.</text>
</comment>
<comment type="induction">
    <text evidence="1">By heat shock.</text>
</comment>
<comment type="similarity">
    <text evidence="1">Belongs to the peptidase S16 family.</text>
</comment>
<feature type="chain" id="PRO_0000076142" description="Lon protease 1">
    <location>
        <begin position="1"/>
        <end position="817"/>
    </location>
</feature>
<feature type="domain" description="Lon N-terminal" evidence="3">
    <location>
        <begin position="18"/>
        <end position="216"/>
    </location>
</feature>
<feature type="domain" description="Lon proteolytic" evidence="2">
    <location>
        <begin position="604"/>
        <end position="785"/>
    </location>
</feature>
<feature type="region of interest" description="Disordered" evidence="4">
    <location>
        <begin position="789"/>
        <end position="817"/>
    </location>
</feature>
<feature type="active site" evidence="1">
    <location>
        <position position="691"/>
    </location>
</feature>
<feature type="active site" evidence="1">
    <location>
        <position position="734"/>
    </location>
</feature>
<feature type="binding site" evidence="1">
    <location>
        <begin position="368"/>
        <end position="375"/>
    </location>
    <ligand>
        <name>ATP</name>
        <dbReference type="ChEBI" id="CHEBI:30616"/>
    </ligand>
</feature>
<name>LON1_MYXXA</name>
<protein>
    <recommendedName>
        <fullName evidence="1">Lon protease 1</fullName>
        <ecNumber evidence="1">3.4.21.53</ecNumber>
    </recommendedName>
    <alternativeName>
        <fullName evidence="1">ATP-dependent protease La 1</fullName>
    </alternativeName>
</protein>
<organism>
    <name type="scientific">Myxococcus xanthus</name>
    <dbReference type="NCBI Taxonomy" id="34"/>
    <lineage>
        <taxon>Bacteria</taxon>
        <taxon>Pseudomonadati</taxon>
        <taxon>Myxococcota</taxon>
        <taxon>Myxococcia</taxon>
        <taxon>Myxococcales</taxon>
        <taxon>Cystobacterineae</taxon>
        <taxon>Myxococcaceae</taxon>
        <taxon>Myxococcus</taxon>
    </lineage>
</organism>